<comment type="similarity">
    <text evidence="1">Belongs to the UPF0250 family.</text>
</comment>
<sequence length="88" mass="9701">MLDTKFDELMEFPSSFPFKIVGDASDTLADRVVAVAQSLAPDDYTPITKVSSKGTYNSVTIRITVTSKEQIEQLYTQLAAIEGVKRVL</sequence>
<name>Y3239_SHEHH</name>
<gene>
    <name type="ordered locus">Shal_3239</name>
</gene>
<proteinExistence type="inferred from homology"/>
<protein>
    <recommendedName>
        <fullName evidence="1">UPF0250 protein Shal_3239</fullName>
    </recommendedName>
</protein>
<accession>B0TR55</accession>
<reference key="1">
    <citation type="submission" date="2008-01" db="EMBL/GenBank/DDBJ databases">
        <title>Complete sequence of Shewanella halifaxensis HAW-EB4.</title>
        <authorList>
            <consortium name="US DOE Joint Genome Institute"/>
            <person name="Copeland A."/>
            <person name="Lucas S."/>
            <person name="Lapidus A."/>
            <person name="Glavina del Rio T."/>
            <person name="Dalin E."/>
            <person name="Tice H."/>
            <person name="Bruce D."/>
            <person name="Goodwin L."/>
            <person name="Pitluck S."/>
            <person name="Sims D."/>
            <person name="Brettin T."/>
            <person name="Detter J.C."/>
            <person name="Han C."/>
            <person name="Kuske C.R."/>
            <person name="Schmutz J."/>
            <person name="Larimer F."/>
            <person name="Land M."/>
            <person name="Hauser L."/>
            <person name="Kyrpides N."/>
            <person name="Kim E."/>
            <person name="Zhao J.-S."/>
            <person name="Richardson P."/>
        </authorList>
    </citation>
    <scope>NUCLEOTIDE SEQUENCE [LARGE SCALE GENOMIC DNA]</scope>
    <source>
        <strain>HAW-EB4</strain>
    </source>
</reference>
<organism>
    <name type="scientific">Shewanella halifaxensis (strain HAW-EB4)</name>
    <dbReference type="NCBI Taxonomy" id="458817"/>
    <lineage>
        <taxon>Bacteria</taxon>
        <taxon>Pseudomonadati</taxon>
        <taxon>Pseudomonadota</taxon>
        <taxon>Gammaproteobacteria</taxon>
        <taxon>Alteromonadales</taxon>
        <taxon>Shewanellaceae</taxon>
        <taxon>Shewanella</taxon>
    </lineage>
</organism>
<evidence type="ECO:0000255" key="1">
    <source>
        <dbReference type="HAMAP-Rule" id="MF_00659"/>
    </source>
</evidence>
<feature type="chain" id="PRO_1000082829" description="UPF0250 protein Shal_3239">
    <location>
        <begin position="1"/>
        <end position="88"/>
    </location>
</feature>
<dbReference type="EMBL" id="CP000931">
    <property type="protein sequence ID" value="ABZ77786.1"/>
    <property type="molecule type" value="Genomic_DNA"/>
</dbReference>
<dbReference type="RefSeq" id="WP_012278308.1">
    <property type="nucleotide sequence ID" value="NC_010334.1"/>
</dbReference>
<dbReference type="SMR" id="B0TR55"/>
<dbReference type="STRING" id="458817.Shal_3239"/>
<dbReference type="KEGG" id="shl:Shal_3239"/>
<dbReference type="eggNOG" id="COG2921">
    <property type="taxonomic scope" value="Bacteria"/>
</dbReference>
<dbReference type="HOGENOM" id="CLU_161438_2_1_6"/>
<dbReference type="OrthoDB" id="9793424at2"/>
<dbReference type="Proteomes" id="UP000001317">
    <property type="component" value="Chromosome"/>
</dbReference>
<dbReference type="GO" id="GO:0005829">
    <property type="term" value="C:cytosol"/>
    <property type="evidence" value="ECO:0007669"/>
    <property type="project" value="TreeGrafter"/>
</dbReference>
<dbReference type="Gene3D" id="3.30.70.260">
    <property type="match status" value="1"/>
</dbReference>
<dbReference type="HAMAP" id="MF_00659">
    <property type="entry name" value="UPF0250"/>
    <property type="match status" value="1"/>
</dbReference>
<dbReference type="InterPro" id="IPR007454">
    <property type="entry name" value="UPF0250_YbeD-like"/>
</dbReference>
<dbReference type="InterPro" id="IPR027471">
    <property type="entry name" value="YbeD-like_sf"/>
</dbReference>
<dbReference type="NCBIfam" id="NF003447">
    <property type="entry name" value="PRK04998.1"/>
    <property type="match status" value="1"/>
</dbReference>
<dbReference type="PANTHER" id="PTHR38036">
    <property type="entry name" value="UPF0250 PROTEIN YBED"/>
    <property type="match status" value="1"/>
</dbReference>
<dbReference type="PANTHER" id="PTHR38036:SF1">
    <property type="entry name" value="UPF0250 PROTEIN YBED"/>
    <property type="match status" value="1"/>
</dbReference>
<dbReference type="Pfam" id="PF04359">
    <property type="entry name" value="DUF493"/>
    <property type="match status" value="1"/>
</dbReference>
<dbReference type="SUPFAM" id="SSF117991">
    <property type="entry name" value="YbeD/HP0495-like"/>
    <property type="match status" value="1"/>
</dbReference>